<dbReference type="EMBL" id="FM992689">
    <property type="protein sequence ID" value="CAX44166.1"/>
    <property type="molecule type" value="Genomic_DNA"/>
</dbReference>
<dbReference type="EMBL" id="FM992689">
    <property type="protein sequence ID" value="CAX44188.1"/>
    <property type="molecule type" value="Genomic_DNA"/>
</dbReference>
<dbReference type="RefSeq" id="XP_002418860.1">
    <property type="nucleotide sequence ID" value="XM_002418815.1"/>
</dbReference>
<dbReference type="RefSeq" id="XP_002418882.1">
    <property type="nucleotide sequence ID" value="XM_002418837.1"/>
</dbReference>
<dbReference type="SMR" id="B9WCP3"/>
<dbReference type="GeneID" id="8046395"/>
<dbReference type="GeneID" id="8046415"/>
<dbReference type="KEGG" id="cdu:CD36_23860"/>
<dbReference type="KEGG" id="cdu:CD36_24080"/>
<dbReference type="CGD" id="CAL0000167620">
    <property type="gene designation" value="Cd36_23860"/>
</dbReference>
<dbReference type="CGD" id="CAL0000161564">
    <property type="gene designation" value="Cd36_24080"/>
</dbReference>
<dbReference type="VEuPathDB" id="FungiDB:CD36_23860"/>
<dbReference type="VEuPathDB" id="FungiDB:CD36_24080"/>
<dbReference type="eggNOG" id="ENOG502S7BF">
    <property type="taxonomic scope" value="Eukaryota"/>
</dbReference>
<dbReference type="HOGENOM" id="CLU_078554_0_0_1"/>
<dbReference type="OrthoDB" id="1926781at2759"/>
<dbReference type="Proteomes" id="UP000002605">
    <property type="component" value="Chromosome 2"/>
</dbReference>
<dbReference type="GO" id="GO:0005789">
    <property type="term" value="C:endoplasmic reticulum membrane"/>
    <property type="evidence" value="ECO:0007669"/>
    <property type="project" value="UniProtKB-SubCell"/>
</dbReference>
<dbReference type="InterPro" id="IPR005595">
    <property type="entry name" value="TRAP_alpha"/>
</dbReference>
<dbReference type="PANTHER" id="PTHR12924:SF0">
    <property type="entry name" value="TRANSLOCON-ASSOCIATED PROTEIN SUBUNIT ALPHA"/>
    <property type="match status" value="1"/>
</dbReference>
<dbReference type="PANTHER" id="PTHR12924">
    <property type="entry name" value="TRANSLOCON-ASSOCIATED PROTEIN, ALPHA SUBUNIT"/>
    <property type="match status" value="1"/>
</dbReference>
<dbReference type="Pfam" id="PF03896">
    <property type="entry name" value="TRAP_alpha"/>
    <property type="match status" value="1"/>
</dbReference>
<comment type="function">
    <text>Is probably involved in a pathway contributing to genomic integrity.</text>
</comment>
<comment type="subcellular location">
    <subcellularLocation>
        <location evidence="1">Endoplasmic reticulum membrane</location>
        <topology evidence="1">Single-pass type I membrane protein</topology>
    </subcellularLocation>
</comment>
<comment type="similarity">
    <text evidence="4">Belongs to the IRC22 family.</text>
</comment>
<evidence type="ECO:0000250" key="1"/>
<evidence type="ECO:0000255" key="2"/>
<evidence type="ECO:0000256" key="3">
    <source>
        <dbReference type="SAM" id="MobiDB-lite"/>
    </source>
</evidence>
<evidence type="ECO:0000305" key="4"/>
<protein>
    <recommendedName>
        <fullName>Increased recombination centers protein 22</fullName>
    </recommendedName>
</protein>
<organism>
    <name type="scientific">Candida dubliniensis (strain CD36 / ATCC MYA-646 / CBS 7987 / NCPF 3949 / NRRL Y-17841)</name>
    <name type="common">Yeast</name>
    <dbReference type="NCBI Taxonomy" id="573826"/>
    <lineage>
        <taxon>Eukaryota</taxon>
        <taxon>Fungi</taxon>
        <taxon>Dikarya</taxon>
        <taxon>Ascomycota</taxon>
        <taxon>Saccharomycotina</taxon>
        <taxon>Pichiomycetes</taxon>
        <taxon>Debaryomycetaceae</taxon>
        <taxon>Candida/Lodderomyces clade</taxon>
        <taxon>Candida</taxon>
    </lineage>
</organism>
<name>IRC22_CANDC</name>
<accession>B9WCP3</accession>
<sequence>MKLSTIFTVFAATIATVAGYETTGSKQTVDILIDYVIKETPELSQNDVANWENGDTVTLQYVVNNNEETEITVVGVTGQFKNPINNEIVTNLTTGKVGPIAVPPGEAIKFDQKINVDLIPANYELIPHVFIAQDSLIKVIPCRGQLATIVDAAVSFFDPRLIFLELVLLVTFAGLLYVGYEIWGKQYFKSVAPVKAKKTSTKASSPVASASTSAATGYDTNWIPESHLKQKKTKKVN</sequence>
<keyword id="KW-0256">Endoplasmic reticulum</keyword>
<keyword id="KW-0472">Membrane</keyword>
<keyword id="KW-0732">Signal</keyword>
<keyword id="KW-0812">Transmembrane</keyword>
<keyword id="KW-1133">Transmembrane helix</keyword>
<feature type="signal peptide" evidence="2">
    <location>
        <begin position="1"/>
        <end position="19"/>
    </location>
</feature>
<feature type="chain" id="PRO_0000399074" description="Increased recombination centers protein 22">
    <location>
        <begin position="20"/>
        <end position="237"/>
    </location>
</feature>
<feature type="topological domain" description="Extracellular" evidence="2">
    <location>
        <begin position="20"/>
        <end position="161"/>
    </location>
</feature>
<feature type="transmembrane region" description="Helical" evidence="2">
    <location>
        <begin position="162"/>
        <end position="182"/>
    </location>
</feature>
<feature type="topological domain" description="Cytoplasmic" evidence="2">
    <location>
        <begin position="183"/>
        <end position="237"/>
    </location>
</feature>
<feature type="region of interest" description="Disordered" evidence="3">
    <location>
        <begin position="198"/>
        <end position="219"/>
    </location>
</feature>
<feature type="compositionally biased region" description="Low complexity" evidence="3">
    <location>
        <begin position="201"/>
        <end position="216"/>
    </location>
</feature>
<reference key="1">
    <citation type="journal article" date="2009" name="Genome Res.">
        <title>Comparative genomics of the fungal pathogens Candida dubliniensis and Candida albicans.</title>
        <authorList>
            <person name="Jackson A.P."/>
            <person name="Gamble J.A."/>
            <person name="Yeomans T."/>
            <person name="Moran G.P."/>
            <person name="Saunders D."/>
            <person name="Harris D."/>
            <person name="Aslett M."/>
            <person name="Barrell J.F."/>
            <person name="Butler G."/>
            <person name="Citiulo F."/>
            <person name="Coleman D.C."/>
            <person name="de Groot P.W.J."/>
            <person name="Goodwin T.J."/>
            <person name="Quail M.A."/>
            <person name="McQuillan J."/>
            <person name="Munro C.A."/>
            <person name="Pain A."/>
            <person name="Poulter R.T."/>
            <person name="Rajandream M.A."/>
            <person name="Renauld H."/>
            <person name="Spiering M.J."/>
            <person name="Tivey A."/>
            <person name="Gow N.A.R."/>
            <person name="Barrell B."/>
            <person name="Sullivan D.J."/>
            <person name="Berriman M."/>
        </authorList>
    </citation>
    <scope>NUCLEOTIDE SEQUENCE [LARGE SCALE GENOMIC DNA]</scope>
    <source>
        <strain>CD36 / ATCC MYA-646 / CBS 7987 / NCPF 3949 / NRRL Y-17841</strain>
    </source>
</reference>
<gene>
    <name type="primary">IRC22</name>
    <name type="ORF">CD36_23860</name>
    <name type="ORF">CD36_24080</name>
</gene>
<proteinExistence type="inferred from homology"/>